<keyword id="KW-0456">Lyase</keyword>
<keyword id="KW-1185">Reference proteome</keyword>
<dbReference type="EC" id="4.2.3.3" evidence="1"/>
<dbReference type="EMBL" id="CP000724">
    <property type="protein sequence ID" value="ABR48454.1"/>
    <property type="molecule type" value="Genomic_DNA"/>
</dbReference>
<dbReference type="RefSeq" id="WP_012063429.1">
    <property type="nucleotide sequence ID" value="NC_009633.1"/>
</dbReference>
<dbReference type="SMR" id="A6TQI6"/>
<dbReference type="STRING" id="293826.Amet_2297"/>
<dbReference type="KEGG" id="amt:Amet_2297"/>
<dbReference type="eggNOG" id="COG1803">
    <property type="taxonomic scope" value="Bacteria"/>
</dbReference>
<dbReference type="HOGENOM" id="CLU_120420_1_0_9"/>
<dbReference type="OrthoDB" id="9787147at2"/>
<dbReference type="Proteomes" id="UP000001572">
    <property type="component" value="Chromosome"/>
</dbReference>
<dbReference type="GO" id="GO:0005829">
    <property type="term" value="C:cytosol"/>
    <property type="evidence" value="ECO:0007669"/>
    <property type="project" value="TreeGrafter"/>
</dbReference>
<dbReference type="GO" id="GO:0008929">
    <property type="term" value="F:methylglyoxal synthase activity"/>
    <property type="evidence" value="ECO:0007669"/>
    <property type="project" value="UniProtKB-UniRule"/>
</dbReference>
<dbReference type="GO" id="GO:0019242">
    <property type="term" value="P:methylglyoxal biosynthetic process"/>
    <property type="evidence" value="ECO:0007669"/>
    <property type="project" value="UniProtKB-UniRule"/>
</dbReference>
<dbReference type="CDD" id="cd01422">
    <property type="entry name" value="MGS"/>
    <property type="match status" value="1"/>
</dbReference>
<dbReference type="FunFam" id="3.40.50.1380:FF:000006">
    <property type="entry name" value="Methylglyoxal synthase"/>
    <property type="match status" value="1"/>
</dbReference>
<dbReference type="Gene3D" id="3.40.50.1380">
    <property type="entry name" value="Methylglyoxal synthase-like domain"/>
    <property type="match status" value="1"/>
</dbReference>
<dbReference type="HAMAP" id="MF_00549">
    <property type="entry name" value="Methylglyoxal_synth"/>
    <property type="match status" value="1"/>
</dbReference>
<dbReference type="InterPro" id="IPR004363">
    <property type="entry name" value="Methylgl_synth"/>
</dbReference>
<dbReference type="InterPro" id="IPR018148">
    <property type="entry name" value="Methylglyoxal_synth_AS"/>
</dbReference>
<dbReference type="InterPro" id="IPR011607">
    <property type="entry name" value="MGS-like_dom"/>
</dbReference>
<dbReference type="InterPro" id="IPR036914">
    <property type="entry name" value="MGS-like_dom_sf"/>
</dbReference>
<dbReference type="NCBIfam" id="TIGR00160">
    <property type="entry name" value="MGSA"/>
    <property type="match status" value="1"/>
</dbReference>
<dbReference type="NCBIfam" id="NF003559">
    <property type="entry name" value="PRK05234.1"/>
    <property type="match status" value="1"/>
</dbReference>
<dbReference type="PANTHER" id="PTHR30492">
    <property type="entry name" value="METHYLGLYOXAL SYNTHASE"/>
    <property type="match status" value="1"/>
</dbReference>
<dbReference type="PANTHER" id="PTHR30492:SF0">
    <property type="entry name" value="METHYLGLYOXAL SYNTHASE"/>
    <property type="match status" value="1"/>
</dbReference>
<dbReference type="Pfam" id="PF02142">
    <property type="entry name" value="MGS"/>
    <property type="match status" value="1"/>
</dbReference>
<dbReference type="PIRSF" id="PIRSF006614">
    <property type="entry name" value="Methylglyox_syn"/>
    <property type="match status" value="1"/>
</dbReference>
<dbReference type="SMART" id="SM00851">
    <property type="entry name" value="MGS"/>
    <property type="match status" value="1"/>
</dbReference>
<dbReference type="SUPFAM" id="SSF52335">
    <property type="entry name" value="Methylglyoxal synthase-like"/>
    <property type="match status" value="1"/>
</dbReference>
<dbReference type="PROSITE" id="PS01335">
    <property type="entry name" value="METHYLGLYOXAL_SYNTH"/>
    <property type="match status" value="1"/>
</dbReference>
<dbReference type="PROSITE" id="PS51855">
    <property type="entry name" value="MGS"/>
    <property type="match status" value="1"/>
</dbReference>
<evidence type="ECO:0000255" key="1">
    <source>
        <dbReference type="HAMAP-Rule" id="MF_00549"/>
    </source>
</evidence>
<name>MGSA_ALKMQ</name>
<proteinExistence type="inferred from homology"/>
<comment type="function">
    <text evidence="1">Catalyzes the formation of methylglyoxal from dihydroxyacetone phosphate.</text>
</comment>
<comment type="catalytic activity">
    <reaction evidence="1">
        <text>dihydroxyacetone phosphate = methylglyoxal + phosphate</text>
        <dbReference type="Rhea" id="RHEA:17937"/>
        <dbReference type="ChEBI" id="CHEBI:17158"/>
        <dbReference type="ChEBI" id="CHEBI:43474"/>
        <dbReference type="ChEBI" id="CHEBI:57642"/>
        <dbReference type="EC" id="4.2.3.3"/>
    </reaction>
</comment>
<comment type="similarity">
    <text evidence="1">Belongs to the methylglyoxal synthase family.</text>
</comment>
<organism>
    <name type="scientific">Alkaliphilus metalliredigens (strain QYMF)</name>
    <dbReference type="NCBI Taxonomy" id="293826"/>
    <lineage>
        <taxon>Bacteria</taxon>
        <taxon>Bacillati</taxon>
        <taxon>Bacillota</taxon>
        <taxon>Clostridia</taxon>
        <taxon>Peptostreptococcales</taxon>
        <taxon>Natronincolaceae</taxon>
        <taxon>Alkaliphilus</taxon>
    </lineage>
</organism>
<feature type="chain" id="PRO_1000061085" description="Methylglyoxal synthase">
    <location>
        <begin position="1"/>
        <end position="134"/>
    </location>
</feature>
<feature type="domain" description="MGS-like" evidence="1">
    <location>
        <begin position="1"/>
        <end position="134"/>
    </location>
</feature>
<feature type="active site" description="Proton donor/acceptor" evidence="1">
    <location>
        <position position="60"/>
    </location>
</feature>
<feature type="binding site" evidence="1">
    <location>
        <position position="8"/>
    </location>
    <ligand>
        <name>substrate</name>
    </ligand>
</feature>
<feature type="binding site" evidence="1">
    <location>
        <position position="12"/>
    </location>
    <ligand>
        <name>substrate</name>
    </ligand>
</feature>
<feature type="binding site" evidence="1">
    <location>
        <begin position="34"/>
        <end position="37"/>
    </location>
    <ligand>
        <name>substrate</name>
    </ligand>
</feature>
<feature type="binding site" evidence="1">
    <location>
        <begin position="54"/>
        <end position="55"/>
    </location>
    <ligand>
        <name>substrate</name>
    </ligand>
</feature>
<feature type="binding site" evidence="1">
    <location>
        <position position="87"/>
    </location>
    <ligand>
        <name>substrate</name>
    </ligand>
</feature>
<reference key="1">
    <citation type="journal article" date="2016" name="Genome Announc.">
        <title>Complete genome sequence of Alkaliphilus metalliredigens strain QYMF, an alkaliphilic and metal-reducing bacterium isolated from borax-contaminated leachate ponds.</title>
        <authorList>
            <person name="Hwang C."/>
            <person name="Copeland A."/>
            <person name="Lucas S."/>
            <person name="Lapidus A."/>
            <person name="Barry K."/>
            <person name="Detter J.C."/>
            <person name="Glavina Del Rio T."/>
            <person name="Hammon N."/>
            <person name="Israni S."/>
            <person name="Dalin E."/>
            <person name="Tice H."/>
            <person name="Pitluck S."/>
            <person name="Chertkov O."/>
            <person name="Brettin T."/>
            <person name="Bruce D."/>
            <person name="Han C."/>
            <person name="Schmutz J."/>
            <person name="Larimer F."/>
            <person name="Land M.L."/>
            <person name="Hauser L."/>
            <person name="Kyrpides N."/>
            <person name="Mikhailova N."/>
            <person name="Ye Q."/>
            <person name="Zhou J."/>
            <person name="Richardson P."/>
            <person name="Fields M.W."/>
        </authorList>
    </citation>
    <scope>NUCLEOTIDE SEQUENCE [LARGE SCALE GENOMIC DNA]</scope>
    <source>
        <strain>QYMF</strain>
    </source>
</reference>
<accession>A6TQI6</accession>
<protein>
    <recommendedName>
        <fullName evidence="1">Methylglyoxal synthase</fullName>
        <shortName evidence="1">MGS</shortName>
        <ecNumber evidence="1">4.2.3.3</ecNumber>
    </recommendedName>
</protein>
<sequence length="134" mass="15153">MNIALIAHDNKKKMMINFTTAYELILLNHQLYATGTTGKRIMEETNLKVTRFQSGPLGGDQQIGAEIANNRMDVVIFLRDSLTAQPHEPDIQALIRLCDVHMIPVATNIATAEILIRALERGDLDWRERVKERG</sequence>
<gene>
    <name evidence="1" type="primary">mgsA</name>
    <name type="ordered locus">Amet_2297</name>
</gene>